<feature type="chain" id="PRO_1000137025" description="Protein Syd">
    <location>
        <begin position="1"/>
        <end position="181"/>
    </location>
</feature>
<dbReference type="EMBL" id="CP001164">
    <property type="protein sequence ID" value="ACI39508.1"/>
    <property type="molecule type" value="Genomic_DNA"/>
</dbReference>
<dbReference type="RefSeq" id="WP_000342430.1">
    <property type="nucleotide sequence ID" value="NC_011353.1"/>
</dbReference>
<dbReference type="SMR" id="B5Z3F8"/>
<dbReference type="KEGG" id="ecf:ECH74115_4057"/>
<dbReference type="HOGENOM" id="CLU_121866_0_0_6"/>
<dbReference type="GO" id="GO:0009898">
    <property type="term" value="C:cytoplasmic side of plasma membrane"/>
    <property type="evidence" value="ECO:0007669"/>
    <property type="project" value="InterPro"/>
</dbReference>
<dbReference type="CDD" id="cd16323">
    <property type="entry name" value="Syd"/>
    <property type="match status" value="1"/>
</dbReference>
<dbReference type="FunFam" id="3.40.1580.20:FF:000001">
    <property type="entry name" value="Protein Syd"/>
    <property type="match status" value="1"/>
</dbReference>
<dbReference type="Gene3D" id="3.40.1580.20">
    <property type="entry name" value="Syd protein"/>
    <property type="match status" value="1"/>
</dbReference>
<dbReference type="HAMAP" id="MF_01104">
    <property type="entry name" value="Syd"/>
    <property type="match status" value="1"/>
</dbReference>
<dbReference type="InterPro" id="IPR009948">
    <property type="entry name" value="Syd"/>
</dbReference>
<dbReference type="InterPro" id="IPR038228">
    <property type="entry name" value="Syd_sf"/>
</dbReference>
<dbReference type="NCBIfam" id="NF003439">
    <property type="entry name" value="PRK04968.1"/>
    <property type="match status" value="1"/>
</dbReference>
<dbReference type="Pfam" id="PF07348">
    <property type="entry name" value="Syd"/>
    <property type="match status" value="1"/>
</dbReference>
<protein>
    <recommendedName>
        <fullName evidence="1">Protein Syd</fullName>
    </recommendedName>
</protein>
<comment type="function">
    <text evidence="1">Interacts with the SecY protein in vivo. May bind preferentially to an uncomplexed state of SecY, thus functioning either as a chelating agent for excess SecY in the cell or as a regulatory factor that negatively controls the translocase function.</text>
</comment>
<comment type="subcellular location">
    <subcellularLocation>
        <location evidence="1">Cell inner membrane</location>
        <topology evidence="1">Peripheral membrane protein</topology>
        <orientation evidence="1">Cytoplasmic side</orientation>
    </subcellularLocation>
    <text evidence="1">Loosely associated with the cytoplasmic side of the inner membrane, probably via SecY.</text>
</comment>
<comment type="similarity">
    <text evidence="1">Belongs to the Syd family.</text>
</comment>
<accession>B5Z3F8</accession>
<gene>
    <name evidence="1" type="primary">syd</name>
    <name type="ordered locus">ECH74115_4057</name>
</gene>
<keyword id="KW-0997">Cell inner membrane</keyword>
<keyword id="KW-1003">Cell membrane</keyword>
<keyword id="KW-0472">Membrane</keyword>
<reference key="1">
    <citation type="journal article" date="2011" name="Proc. Natl. Acad. Sci. U.S.A.">
        <title>Genomic anatomy of Escherichia coli O157:H7 outbreaks.</title>
        <authorList>
            <person name="Eppinger M."/>
            <person name="Mammel M.K."/>
            <person name="Leclerc J.E."/>
            <person name="Ravel J."/>
            <person name="Cebula T.A."/>
        </authorList>
    </citation>
    <scope>NUCLEOTIDE SEQUENCE [LARGE SCALE GENOMIC DNA]</scope>
    <source>
        <strain>EC4115 / EHEC</strain>
    </source>
</reference>
<evidence type="ECO:0000255" key="1">
    <source>
        <dbReference type="HAMAP-Rule" id="MF_01104"/>
    </source>
</evidence>
<sequence>MDDLTAQALKDFTARYCDAWHEEHKSWPLSEELYGVPSPCIISTTEDAVYWQPQPFTGEQNVNAVERAFDIVIQPTIHTFYTTQFAGDMHAQFGDIKLTLLQTWSEDDFRRVQENLIGHLVTQKRLKLPPTLFIATLEEELEVISVCNLSGEVCKETLGTRKRTHLAPNLAEFLNQLKPLL</sequence>
<proteinExistence type="inferred from homology"/>
<organism>
    <name type="scientific">Escherichia coli O157:H7 (strain EC4115 / EHEC)</name>
    <dbReference type="NCBI Taxonomy" id="444450"/>
    <lineage>
        <taxon>Bacteria</taxon>
        <taxon>Pseudomonadati</taxon>
        <taxon>Pseudomonadota</taxon>
        <taxon>Gammaproteobacteria</taxon>
        <taxon>Enterobacterales</taxon>
        <taxon>Enterobacteriaceae</taxon>
        <taxon>Escherichia</taxon>
    </lineage>
</organism>
<name>SYDP_ECO5E</name>